<proteinExistence type="evidence at protein level"/>
<feature type="initiator methionine" description="Removed" evidence="1">
    <location>
        <position position="1"/>
    </location>
</feature>
<feature type="chain" id="PRO_0000187246" description="Ferredoxin, 2Fe-2S">
    <location>
        <begin position="2"/>
        <end position="111"/>
    </location>
</feature>
<feature type="binding site">
    <location>
        <position position="10"/>
    </location>
    <ligand>
        <name>[2Fe-2S] cluster</name>
        <dbReference type="ChEBI" id="CHEBI:190135"/>
    </ligand>
</feature>
<feature type="binding site">
    <location>
        <position position="23"/>
    </location>
    <ligand>
        <name>[2Fe-2S] cluster</name>
        <dbReference type="ChEBI" id="CHEBI:190135"/>
    </ligand>
</feature>
<feature type="binding site">
    <location>
        <position position="56"/>
    </location>
    <ligand>
        <name>[2Fe-2S] cluster</name>
        <dbReference type="ChEBI" id="CHEBI:190135"/>
    </ligand>
</feature>
<feature type="binding site">
    <location>
        <position position="60"/>
    </location>
    <ligand>
        <name>[2Fe-2S] cluster</name>
        <dbReference type="ChEBI" id="CHEBI:190135"/>
    </ligand>
</feature>
<feature type="strand" evidence="3">
    <location>
        <begin position="5"/>
        <end position="10"/>
    </location>
</feature>
<feature type="helix" evidence="3">
    <location>
        <begin position="24"/>
        <end position="26"/>
    </location>
</feature>
<feature type="helix" evidence="3">
    <location>
        <begin position="28"/>
        <end position="41"/>
    </location>
</feature>
<feature type="helix" evidence="3">
    <location>
        <begin position="43"/>
        <end position="46"/>
    </location>
</feature>
<feature type="strand" evidence="3">
    <location>
        <begin position="49"/>
        <end position="55"/>
    </location>
</feature>
<feature type="helix" evidence="3">
    <location>
        <begin position="60"/>
        <end position="62"/>
    </location>
</feature>
<feature type="strand" evidence="3">
    <location>
        <begin position="66"/>
        <end position="69"/>
    </location>
</feature>
<feature type="turn" evidence="3">
    <location>
        <begin position="70"/>
        <end position="72"/>
    </location>
</feature>
<feature type="strand" evidence="3">
    <location>
        <begin position="73"/>
        <end position="75"/>
    </location>
</feature>
<feature type="helix" evidence="3">
    <location>
        <begin position="80"/>
        <end position="82"/>
    </location>
</feature>
<feature type="helix" evidence="3">
    <location>
        <begin position="83"/>
        <end position="89"/>
    </location>
</feature>
<feature type="turn" evidence="3">
    <location>
        <begin position="90"/>
        <end position="93"/>
    </location>
</feature>
<feature type="helix" evidence="3">
    <location>
        <begin position="98"/>
        <end position="100"/>
    </location>
</feature>
<feature type="strand" evidence="3">
    <location>
        <begin position="101"/>
        <end position="103"/>
    </location>
</feature>
<organism>
    <name type="scientific">Aquifex aeolicus (strain VF5)</name>
    <dbReference type="NCBI Taxonomy" id="224324"/>
    <lineage>
        <taxon>Bacteria</taxon>
        <taxon>Pseudomonadati</taxon>
        <taxon>Aquificota</taxon>
        <taxon>Aquificia</taxon>
        <taxon>Aquificales</taxon>
        <taxon>Aquificaceae</taxon>
        <taxon>Aquifex</taxon>
    </lineage>
</organism>
<sequence length="111" mass="12323">MAEFKHVFVCVQDRPPGHPQGSCAQRGSREVFQAFMEKIQTDPQLFMTTVITPTGCMNACMMGPVVVVYPDGVWYGQVKPEDVDEIVEKHLKGGEPVERLVISKGKPPGMF</sequence>
<protein>
    <recommendedName>
        <fullName>Ferredoxin, 2Fe-2S</fullName>
    </recommendedName>
    <alternativeName>
        <fullName>AaFd4</fullName>
    </alternativeName>
</protein>
<comment type="function">
    <text>Ferredoxins are iron-sulfur proteins that transfer electrons in a wide variety of metabolic reactions.</text>
</comment>
<comment type="cofactor">
    <cofactor>
        <name>[2Fe-2S] cluster</name>
        <dbReference type="ChEBI" id="CHEBI:190135"/>
    </cofactor>
    <text>Binds 1 [2Fe-2S] cluster.</text>
</comment>
<comment type="subunit">
    <text evidence="1">Homodimer in solution.</text>
</comment>
<comment type="mass spectrometry" mass="24733.0" error="1.0" method="Electrospray" evidence="1"/>
<comment type="similarity">
    <text evidence="2">Belongs to the 2Fe2S Shethna-type ferredoxin family.</text>
</comment>
<comment type="sequence caution" evidence="2">
    <conflict type="frameshift">
        <sequence resource="EMBL-CDS" id="AAC06474"/>
    </conflict>
</comment>
<name>FER2_AQUAE</name>
<evidence type="ECO:0000269" key="1">
    <source>
    </source>
</evidence>
<evidence type="ECO:0000305" key="2"/>
<evidence type="ECO:0007829" key="3">
    <source>
        <dbReference type="PDB" id="1M2D"/>
    </source>
</evidence>
<accession>O66511</accession>
<dbReference type="EMBL" id="AE000657">
    <property type="protein sequence ID" value="AAC06474.1"/>
    <property type="status" value="ALT_FRAME"/>
    <property type="molecule type" value="Genomic_DNA"/>
</dbReference>
<dbReference type="PIR" id="JC7085">
    <property type="entry name" value="JC7085"/>
</dbReference>
<dbReference type="PDB" id="1F37">
    <property type="method" value="X-ray"/>
    <property type="resolution" value="2.30 A"/>
    <property type="chains" value="A/B=2-111"/>
</dbReference>
<dbReference type="PDB" id="1M2A">
    <property type="method" value="X-ray"/>
    <property type="resolution" value="1.50 A"/>
    <property type="chains" value="A/B=2-111"/>
</dbReference>
<dbReference type="PDB" id="1M2B">
    <property type="method" value="X-ray"/>
    <property type="resolution" value="1.25 A"/>
    <property type="chains" value="A/B=2-111"/>
</dbReference>
<dbReference type="PDB" id="1M2D">
    <property type="method" value="X-ray"/>
    <property type="resolution" value="1.05 A"/>
    <property type="chains" value="A/B=2-111"/>
</dbReference>
<dbReference type="PDBsum" id="1F37"/>
<dbReference type="PDBsum" id="1M2A"/>
<dbReference type="PDBsum" id="1M2B"/>
<dbReference type="PDBsum" id="1M2D"/>
<dbReference type="SMR" id="O66511"/>
<dbReference type="STRING" id="224324.aq_108a"/>
<dbReference type="EnsemblBacteria" id="AAC06474">
    <property type="protein sequence ID" value="AAC06474"/>
    <property type="gene ID" value="aq_108a"/>
</dbReference>
<dbReference type="eggNOG" id="COG3411">
    <property type="taxonomic scope" value="Bacteria"/>
</dbReference>
<dbReference type="HOGENOM" id="CLU_2893567_0_0_0"/>
<dbReference type="InParanoid" id="O66511"/>
<dbReference type="EvolutionaryTrace" id="O66511"/>
<dbReference type="Proteomes" id="UP000000798">
    <property type="component" value="Chromosome"/>
</dbReference>
<dbReference type="GO" id="GO:0051537">
    <property type="term" value="F:2 iron, 2 sulfur cluster binding"/>
    <property type="evidence" value="ECO:0007669"/>
    <property type="project" value="UniProtKB-KW"/>
</dbReference>
<dbReference type="GO" id="GO:0046872">
    <property type="term" value="F:metal ion binding"/>
    <property type="evidence" value="ECO:0007669"/>
    <property type="project" value="UniProtKB-KW"/>
</dbReference>
<dbReference type="CDD" id="cd02980">
    <property type="entry name" value="TRX_Fd_family"/>
    <property type="match status" value="1"/>
</dbReference>
<dbReference type="Gene3D" id="3.40.30.10">
    <property type="entry name" value="Glutaredoxin"/>
    <property type="match status" value="1"/>
</dbReference>
<dbReference type="InterPro" id="IPR036249">
    <property type="entry name" value="Thioredoxin-like_sf"/>
</dbReference>
<dbReference type="Pfam" id="PF01257">
    <property type="entry name" value="2Fe-2S_thioredx"/>
    <property type="match status" value="1"/>
</dbReference>
<dbReference type="SUPFAM" id="SSF52833">
    <property type="entry name" value="Thioredoxin-like"/>
    <property type="match status" value="1"/>
</dbReference>
<keyword id="KW-0001">2Fe-2S</keyword>
<keyword id="KW-0002">3D-structure</keyword>
<keyword id="KW-0903">Direct protein sequencing</keyword>
<keyword id="KW-0249">Electron transport</keyword>
<keyword id="KW-0408">Iron</keyword>
<keyword id="KW-0411">Iron-sulfur</keyword>
<keyword id="KW-0479">Metal-binding</keyword>
<keyword id="KW-1185">Reference proteome</keyword>
<keyword id="KW-0813">Transport</keyword>
<reference key="1">
    <citation type="journal article" date="1998" name="Nature">
        <title>The complete genome of the hyperthermophilic bacterium Aquifex aeolicus.</title>
        <authorList>
            <person name="Deckert G."/>
            <person name="Warren P.V."/>
            <person name="Gaasterland T."/>
            <person name="Young W.G."/>
            <person name="Lenox A.L."/>
            <person name="Graham D.E."/>
            <person name="Overbeek R."/>
            <person name="Snead M.A."/>
            <person name="Keller M."/>
            <person name="Aujay M."/>
            <person name="Huber R."/>
            <person name="Feldman R.A."/>
            <person name="Short J.M."/>
            <person name="Olsen G.J."/>
            <person name="Swanson R.V."/>
        </authorList>
    </citation>
    <scope>NUCLEOTIDE SEQUENCE [LARGE SCALE GENOMIC DNA]</scope>
    <source>
        <strain>VF5</strain>
    </source>
</reference>
<reference key="2">
    <citation type="journal article" date="1999" name="Biochem. Biophys. Res. Commun.">
        <title>A [2Fe-2S] protein from the hyperthermophilic bacterium Aquifex aeolicus.</title>
        <authorList>
            <person name="Chatelet C."/>
            <person name="Gaillard J."/>
            <person name="Petillot Y."/>
            <person name="Louwagie M."/>
            <person name="Meyer J."/>
        </authorList>
    </citation>
    <scope>PROTEIN SEQUENCE OF 2-111</scope>
    <scope>SUBUNIT</scope>
    <scope>MASS SPECTROMETRY</scope>
</reference>
<reference key="3">
    <citation type="journal article" date="2000" name="J. Mol. Biol.">
        <title>Structure of a thioredoxin-like [2Fe-2S] ferredoxin from Aquifex aeolicus.</title>
        <authorList>
            <person name="Yeh A.P."/>
            <person name="Chatelet C."/>
            <person name="Soltis S.M."/>
            <person name="Kuhn P."/>
            <person name="Meyer J."/>
            <person name="Rees D.C."/>
        </authorList>
    </citation>
    <scope>X-RAY CRYSTALLOGRAPHY (2.3 ANGSTROMS)</scope>
</reference>
<reference key="4">
    <citation type="journal article" date="2002" name="J. Biol. Chem.">
        <title>High resolution crystal structures of the wild type and Cys-55-&gt;Ser and Cys-59-&gt;Ser variants of the thioredoxin-like [2Fe-2S] ferredoxin from Aquifex aeolicus.</title>
        <authorList>
            <person name="Yeh A.P."/>
            <person name="Ambroggio X.I."/>
            <person name="Andrade S.L.A."/>
            <person name="Einsle O."/>
            <person name="Chatelet C."/>
            <person name="Meyer J."/>
            <person name="Rees D.C."/>
        </authorList>
    </citation>
    <scope>X-RAY CRYSTALLOGRAPHY (1.05 ANGSTROMS)</scope>
</reference>
<gene>
    <name type="primary">fdx4</name>
    <name type="ordered locus">aq_107</name>
    <name type="ORF">aq_108A</name>
</gene>